<feature type="chain" id="PRO_1000047162" description="2,3,4,5-tetrahydropyridine-2,6-dicarboxylate N-succinyltransferase">
    <location>
        <begin position="1"/>
        <end position="276"/>
    </location>
</feature>
<feature type="binding site" evidence="1">
    <location>
        <position position="104"/>
    </location>
    <ligand>
        <name>substrate</name>
    </ligand>
</feature>
<feature type="binding site" evidence="1">
    <location>
        <position position="141"/>
    </location>
    <ligand>
        <name>substrate</name>
    </ligand>
</feature>
<protein>
    <recommendedName>
        <fullName evidence="1">2,3,4,5-tetrahydropyridine-2,6-dicarboxylate N-succinyltransferase</fullName>
        <ecNumber evidence="1">2.3.1.117</ecNumber>
    </recommendedName>
    <alternativeName>
        <fullName evidence="1">Tetrahydrodipicolinate N-succinyltransferase</fullName>
        <shortName evidence="1">THDP succinyltransferase</shortName>
        <shortName evidence="1">THP succinyltransferase</shortName>
        <shortName evidence="1">Tetrahydropicolinate succinylase</shortName>
    </alternativeName>
</protein>
<organism>
    <name type="scientific">Pseudoalteromonas translucida (strain TAC 125)</name>
    <dbReference type="NCBI Taxonomy" id="326442"/>
    <lineage>
        <taxon>Bacteria</taxon>
        <taxon>Pseudomonadati</taxon>
        <taxon>Pseudomonadota</taxon>
        <taxon>Gammaproteobacteria</taxon>
        <taxon>Alteromonadales</taxon>
        <taxon>Pseudoalteromonadaceae</taxon>
        <taxon>Pseudoalteromonas</taxon>
    </lineage>
</organism>
<reference key="1">
    <citation type="journal article" date="2005" name="Genome Res.">
        <title>Coping with cold: the genome of the versatile marine Antarctica bacterium Pseudoalteromonas haloplanktis TAC125.</title>
        <authorList>
            <person name="Medigue C."/>
            <person name="Krin E."/>
            <person name="Pascal G."/>
            <person name="Barbe V."/>
            <person name="Bernsel A."/>
            <person name="Bertin P.N."/>
            <person name="Cheung F."/>
            <person name="Cruveiller S."/>
            <person name="D'Amico S."/>
            <person name="Duilio A."/>
            <person name="Fang G."/>
            <person name="Feller G."/>
            <person name="Ho C."/>
            <person name="Mangenot S."/>
            <person name="Marino G."/>
            <person name="Nilsson J."/>
            <person name="Parrilli E."/>
            <person name="Rocha E.P.C."/>
            <person name="Rouy Z."/>
            <person name="Sekowska A."/>
            <person name="Tutino M.L."/>
            <person name="Vallenet D."/>
            <person name="von Heijne G."/>
            <person name="Danchin A."/>
        </authorList>
    </citation>
    <scope>NUCLEOTIDE SEQUENCE [LARGE SCALE GENOMIC DNA]</scope>
    <source>
        <strain>TAC 125</strain>
    </source>
</reference>
<dbReference type="EC" id="2.3.1.117" evidence="1"/>
<dbReference type="EMBL" id="CR954246">
    <property type="protein sequence ID" value="CAI87095.1"/>
    <property type="molecule type" value="Genomic_DNA"/>
</dbReference>
<dbReference type="SMR" id="Q3IIZ6"/>
<dbReference type="STRING" id="326442.PSHAa2039"/>
<dbReference type="KEGG" id="pha:PSHAa2039"/>
<dbReference type="PATRIC" id="fig|326442.8.peg.1967"/>
<dbReference type="eggNOG" id="COG2171">
    <property type="taxonomic scope" value="Bacteria"/>
</dbReference>
<dbReference type="HOGENOM" id="CLU_050859_0_1_6"/>
<dbReference type="BioCyc" id="PHAL326442:PSHA_RS10075-MONOMER"/>
<dbReference type="UniPathway" id="UPA00034">
    <property type="reaction ID" value="UER00019"/>
</dbReference>
<dbReference type="Proteomes" id="UP000006843">
    <property type="component" value="Chromosome I"/>
</dbReference>
<dbReference type="GO" id="GO:0005737">
    <property type="term" value="C:cytoplasm"/>
    <property type="evidence" value="ECO:0007669"/>
    <property type="project" value="UniProtKB-SubCell"/>
</dbReference>
<dbReference type="GO" id="GO:0008666">
    <property type="term" value="F:2,3,4,5-tetrahydropyridine-2,6-dicarboxylate N-succinyltransferase activity"/>
    <property type="evidence" value="ECO:0007669"/>
    <property type="project" value="UniProtKB-UniRule"/>
</dbReference>
<dbReference type="GO" id="GO:0016779">
    <property type="term" value="F:nucleotidyltransferase activity"/>
    <property type="evidence" value="ECO:0007669"/>
    <property type="project" value="TreeGrafter"/>
</dbReference>
<dbReference type="GO" id="GO:0019877">
    <property type="term" value="P:diaminopimelate biosynthetic process"/>
    <property type="evidence" value="ECO:0007669"/>
    <property type="project" value="UniProtKB-UniRule"/>
</dbReference>
<dbReference type="GO" id="GO:0009089">
    <property type="term" value="P:lysine biosynthetic process via diaminopimelate"/>
    <property type="evidence" value="ECO:0007669"/>
    <property type="project" value="UniProtKB-UniRule"/>
</dbReference>
<dbReference type="CDD" id="cd03350">
    <property type="entry name" value="LbH_THP_succinylT"/>
    <property type="match status" value="1"/>
</dbReference>
<dbReference type="Gene3D" id="2.160.10.10">
    <property type="entry name" value="Hexapeptide repeat proteins"/>
    <property type="match status" value="1"/>
</dbReference>
<dbReference type="Gene3D" id="1.10.166.10">
    <property type="entry name" value="Tetrahydrodipicolinate-N-succinyltransferase, N-terminal domain"/>
    <property type="match status" value="1"/>
</dbReference>
<dbReference type="HAMAP" id="MF_00811">
    <property type="entry name" value="DapD"/>
    <property type="match status" value="1"/>
</dbReference>
<dbReference type="InterPro" id="IPR005664">
    <property type="entry name" value="DapD_Trfase_Hexpep_rpt_fam"/>
</dbReference>
<dbReference type="InterPro" id="IPR001451">
    <property type="entry name" value="Hexapep"/>
</dbReference>
<dbReference type="InterPro" id="IPR018357">
    <property type="entry name" value="Hexapep_transf_CS"/>
</dbReference>
<dbReference type="InterPro" id="IPR023180">
    <property type="entry name" value="THP_succinylTrfase_dom1"/>
</dbReference>
<dbReference type="InterPro" id="IPR037133">
    <property type="entry name" value="THP_succinylTrfase_N_sf"/>
</dbReference>
<dbReference type="InterPro" id="IPR011004">
    <property type="entry name" value="Trimer_LpxA-like_sf"/>
</dbReference>
<dbReference type="NCBIfam" id="TIGR00965">
    <property type="entry name" value="dapD"/>
    <property type="match status" value="1"/>
</dbReference>
<dbReference type="NCBIfam" id="NF008808">
    <property type="entry name" value="PRK11830.1"/>
    <property type="match status" value="1"/>
</dbReference>
<dbReference type="PANTHER" id="PTHR19136:SF52">
    <property type="entry name" value="2,3,4,5-TETRAHYDROPYRIDINE-2,6-DICARBOXYLATE N-SUCCINYLTRANSFERASE"/>
    <property type="match status" value="1"/>
</dbReference>
<dbReference type="PANTHER" id="PTHR19136">
    <property type="entry name" value="MOLYBDENUM COFACTOR GUANYLYLTRANSFERASE"/>
    <property type="match status" value="1"/>
</dbReference>
<dbReference type="Pfam" id="PF14602">
    <property type="entry name" value="Hexapep_2"/>
    <property type="match status" value="1"/>
</dbReference>
<dbReference type="Pfam" id="PF14805">
    <property type="entry name" value="THDPS_N_2"/>
    <property type="match status" value="1"/>
</dbReference>
<dbReference type="SUPFAM" id="SSF51161">
    <property type="entry name" value="Trimeric LpxA-like enzymes"/>
    <property type="match status" value="1"/>
</dbReference>
<dbReference type="PROSITE" id="PS00101">
    <property type="entry name" value="HEXAPEP_TRANSFERASES"/>
    <property type="match status" value="1"/>
</dbReference>
<comment type="catalytic activity">
    <reaction evidence="1">
        <text>(S)-2,3,4,5-tetrahydrodipicolinate + succinyl-CoA + H2O = (S)-2-succinylamino-6-oxoheptanedioate + CoA</text>
        <dbReference type="Rhea" id="RHEA:17325"/>
        <dbReference type="ChEBI" id="CHEBI:15377"/>
        <dbReference type="ChEBI" id="CHEBI:15685"/>
        <dbReference type="ChEBI" id="CHEBI:16845"/>
        <dbReference type="ChEBI" id="CHEBI:57287"/>
        <dbReference type="ChEBI" id="CHEBI:57292"/>
        <dbReference type="EC" id="2.3.1.117"/>
    </reaction>
</comment>
<comment type="pathway">
    <text evidence="1">Amino-acid biosynthesis; L-lysine biosynthesis via DAP pathway; LL-2,6-diaminopimelate from (S)-tetrahydrodipicolinate (succinylase route): step 1/3.</text>
</comment>
<comment type="subunit">
    <text evidence="1">Homotrimer.</text>
</comment>
<comment type="subcellular location">
    <subcellularLocation>
        <location evidence="1">Cytoplasm</location>
    </subcellularLocation>
</comment>
<comment type="similarity">
    <text evidence="1">Belongs to the transferase hexapeptide repeat family.</text>
</comment>
<keyword id="KW-0012">Acyltransferase</keyword>
<keyword id="KW-0028">Amino-acid biosynthesis</keyword>
<keyword id="KW-0963">Cytoplasm</keyword>
<keyword id="KW-0220">Diaminopimelate biosynthesis</keyword>
<keyword id="KW-0457">Lysine biosynthesis</keyword>
<keyword id="KW-1185">Reference proteome</keyword>
<keyword id="KW-0677">Repeat</keyword>
<keyword id="KW-0808">Transferase</keyword>
<accession>Q3IIZ6</accession>
<proteinExistence type="inferred from homology"/>
<gene>
    <name evidence="1" type="primary">dapD</name>
    <name type="ordered locus">PSHAa2039</name>
</gene>
<sequence>MSDLKTMIENAWDNRDSISPSTVSVEVKQAIIDALDLLDSGAARVAEKISGEWVVHQWLKKAVLLSFRIRENQAMDDGVNQFYDKVPLKFSDYTPEQFKQGGMRVVPNAVARKGSFVGKNVVLMPSYVNIGAYVDDGTMVDTWATVGSCAQIGKNVHLSGGVGIGGVLEPLQANPTIIEDNCFIGARSEIVEGVIVEEGAVISMGVYISQSTRIYDRETGEIHYGRVPAGAVVVPGALPSKDGSHSLYAAIIVKKVDQQTREKVGINALLRSIDDE</sequence>
<name>DAPD_PSET1</name>
<evidence type="ECO:0000255" key="1">
    <source>
        <dbReference type="HAMAP-Rule" id="MF_00811"/>
    </source>
</evidence>